<organism>
    <name type="scientific">Lactobacillus delbrueckii subsp. bulgaricus (strain ATCC BAA-365 / Lb-18)</name>
    <dbReference type="NCBI Taxonomy" id="321956"/>
    <lineage>
        <taxon>Bacteria</taxon>
        <taxon>Bacillati</taxon>
        <taxon>Bacillota</taxon>
        <taxon>Bacilli</taxon>
        <taxon>Lactobacillales</taxon>
        <taxon>Lactobacillaceae</taxon>
        <taxon>Lactobacillus</taxon>
    </lineage>
</organism>
<keyword id="KW-0678">Repressor</keyword>
<keyword id="KW-0687">Ribonucleoprotein</keyword>
<keyword id="KW-0689">Ribosomal protein</keyword>
<keyword id="KW-0694">RNA-binding</keyword>
<keyword id="KW-0699">rRNA-binding</keyword>
<keyword id="KW-0810">Translation regulation</keyword>
<keyword id="KW-0820">tRNA-binding</keyword>
<gene>
    <name evidence="1" type="primary">rplA</name>
    <name type="ordered locus">LBUL_1543</name>
</gene>
<name>RL1_LACDB</name>
<proteinExistence type="inferred from homology"/>
<dbReference type="EMBL" id="CP000412">
    <property type="protein sequence ID" value="ABJ59033.1"/>
    <property type="molecule type" value="Genomic_DNA"/>
</dbReference>
<dbReference type="RefSeq" id="WP_003621915.1">
    <property type="nucleotide sequence ID" value="NC_008529.1"/>
</dbReference>
<dbReference type="SMR" id="Q048T9"/>
<dbReference type="KEGG" id="lbu:LBUL_1543"/>
<dbReference type="HOGENOM" id="CLU_062853_0_0_9"/>
<dbReference type="BioCyc" id="LDEL321956:LBUL_RS07265-MONOMER"/>
<dbReference type="GO" id="GO:0015934">
    <property type="term" value="C:large ribosomal subunit"/>
    <property type="evidence" value="ECO:0007669"/>
    <property type="project" value="InterPro"/>
</dbReference>
<dbReference type="GO" id="GO:0019843">
    <property type="term" value="F:rRNA binding"/>
    <property type="evidence" value="ECO:0007669"/>
    <property type="project" value="UniProtKB-UniRule"/>
</dbReference>
<dbReference type="GO" id="GO:0003735">
    <property type="term" value="F:structural constituent of ribosome"/>
    <property type="evidence" value="ECO:0007669"/>
    <property type="project" value="InterPro"/>
</dbReference>
<dbReference type="GO" id="GO:0000049">
    <property type="term" value="F:tRNA binding"/>
    <property type="evidence" value="ECO:0007669"/>
    <property type="project" value="UniProtKB-KW"/>
</dbReference>
<dbReference type="GO" id="GO:0006417">
    <property type="term" value="P:regulation of translation"/>
    <property type="evidence" value="ECO:0007669"/>
    <property type="project" value="UniProtKB-KW"/>
</dbReference>
<dbReference type="GO" id="GO:0006412">
    <property type="term" value="P:translation"/>
    <property type="evidence" value="ECO:0007669"/>
    <property type="project" value="UniProtKB-UniRule"/>
</dbReference>
<dbReference type="CDD" id="cd00403">
    <property type="entry name" value="Ribosomal_L1"/>
    <property type="match status" value="1"/>
</dbReference>
<dbReference type="FunFam" id="3.40.50.790:FF:000001">
    <property type="entry name" value="50S ribosomal protein L1"/>
    <property type="match status" value="1"/>
</dbReference>
<dbReference type="Gene3D" id="3.30.190.20">
    <property type="match status" value="1"/>
</dbReference>
<dbReference type="Gene3D" id="3.40.50.790">
    <property type="match status" value="1"/>
</dbReference>
<dbReference type="HAMAP" id="MF_01318_B">
    <property type="entry name" value="Ribosomal_uL1_B"/>
    <property type="match status" value="1"/>
</dbReference>
<dbReference type="InterPro" id="IPR005878">
    <property type="entry name" value="Ribosom_uL1_bac-type"/>
</dbReference>
<dbReference type="InterPro" id="IPR002143">
    <property type="entry name" value="Ribosomal_uL1"/>
</dbReference>
<dbReference type="InterPro" id="IPR023674">
    <property type="entry name" value="Ribosomal_uL1-like"/>
</dbReference>
<dbReference type="InterPro" id="IPR028364">
    <property type="entry name" value="Ribosomal_uL1/biogenesis"/>
</dbReference>
<dbReference type="InterPro" id="IPR016095">
    <property type="entry name" value="Ribosomal_uL1_3-a/b-sand"/>
</dbReference>
<dbReference type="InterPro" id="IPR023673">
    <property type="entry name" value="Ribosomal_uL1_CS"/>
</dbReference>
<dbReference type="NCBIfam" id="TIGR01169">
    <property type="entry name" value="rplA_bact"/>
    <property type="match status" value="1"/>
</dbReference>
<dbReference type="PANTHER" id="PTHR36427">
    <property type="entry name" value="54S RIBOSOMAL PROTEIN L1, MITOCHONDRIAL"/>
    <property type="match status" value="1"/>
</dbReference>
<dbReference type="PANTHER" id="PTHR36427:SF3">
    <property type="entry name" value="LARGE RIBOSOMAL SUBUNIT PROTEIN UL1M"/>
    <property type="match status" value="1"/>
</dbReference>
<dbReference type="Pfam" id="PF00687">
    <property type="entry name" value="Ribosomal_L1"/>
    <property type="match status" value="1"/>
</dbReference>
<dbReference type="PIRSF" id="PIRSF002155">
    <property type="entry name" value="Ribosomal_L1"/>
    <property type="match status" value="1"/>
</dbReference>
<dbReference type="SUPFAM" id="SSF56808">
    <property type="entry name" value="Ribosomal protein L1"/>
    <property type="match status" value="1"/>
</dbReference>
<dbReference type="PROSITE" id="PS01199">
    <property type="entry name" value="RIBOSOMAL_L1"/>
    <property type="match status" value="1"/>
</dbReference>
<comment type="function">
    <text evidence="1">Binds directly to 23S rRNA. The L1 stalk is quite mobile in the ribosome, and is involved in E site tRNA release.</text>
</comment>
<comment type="function">
    <text evidence="1">Protein L1 is also a translational repressor protein, it controls the translation of the L11 operon by binding to its mRNA.</text>
</comment>
<comment type="subunit">
    <text evidence="1">Part of the 50S ribosomal subunit.</text>
</comment>
<comment type="similarity">
    <text evidence="1">Belongs to the universal ribosomal protein uL1 family.</text>
</comment>
<reference key="1">
    <citation type="journal article" date="2006" name="Proc. Natl. Acad. Sci. U.S.A.">
        <title>Comparative genomics of the lactic acid bacteria.</title>
        <authorList>
            <person name="Makarova K.S."/>
            <person name="Slesarev A."/>
            <person name="Wolf Y.I."/>
            <person name="Sorokin A."/>
            <person name="Mirkin B."/>
            <person name="Koonin E.V."/>
            <person name="Pavlov A."/>
            <person name="Pavlova N."/>
            <person name="Karamychev V."/>
            <person name="Polouchine N."/>
            <person name="Shakhova V."/>
            <person name="Grigoriev I."/>
            <person name="Lou Y."/>
            <person name="Rohksar D."/>
            <person name="Lucas S."/>
            <person name="Huang K."/>
            <person name="Goodstein D.M."/>
            <person name="Hawkins T."/>
            <person name="Plengvidhya V."/>
            <person name="Welker D."/>
            <person name="Hughes J."/>
            <person name="Goh Y."/>
            <person name="Benson A."/>
            <person name="Baldwin K."/>
            <person name="Lee J.-H."/>
            <person name="Diaz-Muniz I."/>
            <person name="Dosti B."/>
            <person name="Smeianov V."/>
            <person name="Wechter W."/>
            <person name="Barabote R."/>
            <person name="Lorca G."/>
            <person name="Altermann E."/>
            <person name="Barrangou R."/>
            <person name="Ganesan B."/>
            <person name="Xie Y."/>
            <person name="Rawsthorne H."/>
            <person name="Tamir D."/>
            <person name="Parker C."/>
            <person name="Breidt F."/>
            <person name="Broadbent J.R."/>
            <person name="Hutkins R."/>
            <person name="O'Sullivan D."/>
            <person name="Steele J."/>
            <person name="Unlu G."/>
            <person name="Saier M.H. Jr."/>
            <person name="Klaenhammer T."/>
            <person name="Richardson P."/>
            <person name="Kozyavkin S."/>
            <person name="Weimer B.C."/>
            <person name="Mills D.A."/>
        </authorList>
    </citation>
    <scope>NUCLEOTIDE SEQUENCE [LARGE SCALE GENOMIC DNA]</scope>
    <source>
        <strain>ATCC BAA-365 / Lb-18</strain>
    </source>
</reference>
<protein>
    <recommendedName>
        <fullName evidence="1">Large ribosomal subunit protein uL1</fullName>
    </recommendedName>
    <alternativeName>
        <fullName evidence="2">50S ribosomal protein L1</fullName>
    </alternativeName>
</protein>
<accession>Q048T9</accession>
<feature type="chain" id="PRO_0000308030" description="Large ribosomal subunit protein uL1">
    <location>
        <begin position="1"/>
        <end position="231"/>
    </location>
</feature>
<sequence length="231" mass="24625">MPKHGKKYVEAAKKVDSNKLYSVEDAIKLVKETSYANFDASVEVSYNLSVDPKQADQQIRGSIVLPNGTGKSVKVIVFAEGPQAEAAKAAGADEVGADDLVEKVQNGYLDFDVVIATPMMMAKVGRLGRVLGPKGLMPNPKTGTVTMDTAKAVQNVKAGQVEYRVDRQASIHTAIGKVSFTEEQLTENFRALQNAILRAKPASAKGQYIKSCAVAATFGPGIKLDPIALMA</sequence>
<evidence type="ECO:0000255" key="1">
    <source>
        <dbReference type="HAMAP-Rule" id="MF_01318"/>
    </source>
</evidence>
<evidence type="ECO:0000305" key="2"/>